<proteinExistence type="inferred from homology"/>
<feature type="chain" id="PRO_1000069772" description="7-cyano-7-deazaguanine synthase">
    <location>
        <begin position="1"/>
        <end position="235"/>
    </location>
</feature>
<feature type="binding site" evidence="1">
    <location>
        <begin position="11"/>
        <end position="21"/>
    </location>
    <ligand>
        <name>ATP</name>
        <dbReference type="ChEBI" id="CHEBI:30616"/>
    </ligand>
</feature>
<feature type="binding site" evidence="1">
    <location>
        <position position="199"/>
    </location>
    <ligand>
        <name>Zn(2+)</name>
        <dbReference type="ChEBI" id="CHEBI:29105"/>
    </ligand>
</feature>
<feature type="binding site" evidence="1">
    <location>
        <position position="214"/>
    </location>
    <ligand>
        <name>Zn(2+)</name>
        <dbReference type="ChEBI" id="CHEBI:29105"/>
    </ligand>
</feature>
<feature type="binding site" evidence="1">
    <location>
        <position position="217"/>
    </location>
    <ligand>
        <name>Zn(2+)</name>
        <dbReference type="ChEBI" id="CHEBI:29105"/>
    </ligand>
</feature>
<feature type="binding site" evidence="1">
    <location>
        <position position="220"/>
    </location>
    <ligand>
        <name>Zn(2+)</name>
        <dbReference type="ChEBI" id="CHEBI:29105"/>
    </ligand>
</feature>
<gene>
    <name evidence="1" type="primary">queC</name>
    <name type="ordered locus">mma_3186</name>
</gene>
<sequence length="235" mass="25935">MSSADGALVLFSGGQDSTTCVAWALKRYAKVETIGFDYGQRHAVELEVRPDVLRSLRDINPEWNKKLGEDHMIDLSLISKISNTAMTQDVEITMMENGLPNTFVPGRNLLFMTVAATVAYRRGLDVLVGGMCETDFSGYPDCRDDTMKALQVALNLGMATRLKLETPLMWIDKAETWKMAQDLGGKPLVDLIRAGTHTCYLGERGALHDWGYGCGTCPACELRARGYANFAAQEK</sequence>
<organism>
    <name type="scientific">Janthinobacterium sp. (strain Marseille)</name>
    <name type="common">Minibacterium massiliensis</name>
    <dbReference type="NCBI Taxonomy" id="375286"/>
    <lineage>
        <taxon>Bacteria</taxon>
        <taxon>Pseudomonadati</taxon>
        <taxon>Pseudomonadota</taxon>
        <taxon>Betaproteobacteria</taxon>
        <taxon>Burkholderiales</taxon>
        <taxon>Oxalobacteraceae</taxon>
        <taxon>Janthinobacterium</taxon>
    </lineage>
</organism>
<protein>
    <recommendedName>
        <fullName evidence="1">7-cyano-7-deazaguanine synthase</fullName>
        <ecNumber evidence="1">6.3.4.20</ecNumber>
    </recommendedName>
    <alternativeName>
        <fullName evidence="1">7-cyano-7-carbaguanine synthase</fullName>
    </alternativeName>
    <alternativeName>
        <fullName evidence="1">PreQ(0) synthase</fullName>
    </alternativeName>
    <alternativeName>
        <fullName evidence="1">Queuosine biosynthesis protein QueC</fullName>
    </alternativeName>
</protein>
<evidence type="ECO:0000255" key="1">
    <source>
        <dbReference type="HAMAP-Rule" id="MF_01633"/>
    </source>
</evidence>
<keyword id="KW-0067">ATP-binding</keyword>
<keyword id="KW-0436">Ligase</keyword>
<keyword id="KW-0479">Metal-binding</keyword>
<keyword id="KW-0547">Nucleotide-binding</keyword>
<keyword id="KW-0671">Queuosine biosynthesis</keyword>
<keyword id="KW-0862">Zinc</keyword>
<comment type="function">
    <text evidence="1">Catalyzes the ATP-dependent conversion of 7-carboxy-7-deazaguanine (CDG) to 7-cyano-7-deazaguanine (preQ(0)).</text>
</comment>
<comment type="catalytic activity">
    <reaction evidence="1">
        <text>7-carboxy-7-deazaguanine + NH4(+) + ATP = 7-cyano-7-deazaguanine + ADP + phosphate + H2O + H(+)</text>
        <dbReference type="Rhea" id="RHEA:27982"/>
        <dbReference type="ChEBI" id="CHEBI:15377"/>
        <dbReference type="ChEBI" id="CHEBI:15378"/>
        <dbReference type="ChEBI" id="CHEBI:28938"/>
        <dbReference type="ChEBI" id="CHEBI:30616"/>
        <dbReference type="ChEBI" id="CHEBI:43474"/>
        <dbReference type="ChEBI" id="CHEBI:45075"/>
        <dbReference type="ChEBI" id="CHEBI:61036"/>
        <dbReference type="ChEBI" id="CHEBI:456216"/>
        <dbReference type="EC" id="6.3.4.20"/>
    </reaction>
</comment>
<comment type="cofactor">
    <cofactor evidence="1">
        <name>Zn(2+)</name>
        <dbReference type="ChEBI" id="CHEBI:29105"/>
    </cofactor>
    <text evidence="1">Binds 1 zinc ion per subunit.</text>
</comment>
<comment type="pathway">
    <text evidence="1">Purine metabolism; 7-cyano-7-deazaguanine biosynthesis.</text>
</comment>
<comment type="similarity">
    <text evidence="1">Belongs to the QueC family.</text>
</comment>
<dbReference type="EC" id="6.3.4.20" evidence="1"/>
<dbReference type="EMBL" id="CP000269">
    <property type="protein sequence ID" value="ABR89782.1"/>
    <property type="molecule type" value="Genomic_DNA"/>
</dbReference>
<dbReference type="RefSeq" id="WP_012081029.1">
    <property type="nucleotide sequence ID" value="NC_009659.1"/>
</dbReference>
<dbReference type="SMR" id="A6T2X9"/>
<dbReference type="STRING" id="375286.mma_3186"/>
<dbReference type="KEGG" id="mms:mma_3186"/>
<dbReference type="eggNOG" id="COG0603">
    <property type="taxonomic scope" value="Bacteria"/>
</dbReference>
<dbReference type="HOGENOM" id="CLU_081854_0_0_4"/>
<dbReference type="OrthoDB" id="9789567at2"/>
<dbReference type="UniPathway" id="UPA00391"/>
<dbReference type="Proteomes" id="UP000006388">
    <property type="component" value="Chromosome"/>
</dbReference>
<dbReference type="GO" id="GO:0005524">
    <property type="term" value="F:ATP binding"/>
    <property type="evidence" value="ECO:0007669"/>
    <property type="project" value="UniProtKB-UniRule"/>
</dbReference>
<dbReference type="GO" id="GO:0016879">
    <property type="term" value="F:ligase activity, forming carbon-nitrogen bonds"/>
    <property type="evidence" value="ECO:0007669"/>
    <property type="project" value="UniProtKB-UniRule"/>
</dbReference>
<dbReference type="GO" id="GO:0008270">
    <property type="term" value="F:zinc ion binding"/>
    <property type="evidence" value="ECO:0007669"/>
    <property type="project" value="UniProtKB-UniRule"/>
</dbReference>
<dbReference type="GO" id="GO:0008616">
    <property type="term" value="P:queuosine biosynthetic process"/>
    <property type="evidence" value="ECO:0007669"/>
    <property type="project" value="UniProtKB-UniRule"/>
</dbReference>
<dbReference type="CDD" id="cd01995">
    <property type="entry name" value="QueC-like"/>
    <property type="match status" value="1"/>
</dbReference>
<dbReference type="Gene3D" id="3.40.50.620">
    <property type="entry name" value="HUPs"/>
    <property type="match status" value="1"/>
</dbReference>
<dbReference type="HAMAP" id="MF_01633">
    <property type="entry name" value="QueC"/>
    <property type="match status" value="1"/>
</dbReference>
<dbReference type="InterPro" id="IPR018317">
    <property type="entry name" value="QueC"/>
</dbReference>
<dbReference type="InterPro" id="IPR014729">
    <property type="entry name" value="Rossmann-like_a/b/a_fold"/>
</dbReference>
<dbReference type="NCBIfam" id="TIGR00364">
    <property type="entry name" value="7-cyano-7-deazaguanine synthase QueC"/>
    <property type="match status" value="1"/>
</dbReference>
<dbReference type="PANTHER" id="PTHR42914">
    <property type="entry name" value="7-CYANO-7-DEAZAGUANINE SYNTHASE"/>
    <property type="match status" value="1"/>
</dbReference>
<dbReference type="PANTHER" id="PTHR42914:SF1">
    <property type="entry name" value="7-CYANO-7-DEAZAGUANINE SYNTHASE"/>
    <property type="match status" value="1"/>
</dbReference>
<dbReference type="Pfam" id="PF06508">
    <property type="entry name" value="QueC"/>
    <property type="match status" value="1"/>
</dbReference>
<dbReference type="PIRSF" id="PIRSF006293">
    <property type="entry name" value="ExsB"/>
    <property type="match status" value="1"/>
</dbReference>
<dbReference type="SUPFAM" id="SSF52402">
    <property type="entry name" value="Adenine nucleotide alpha hydrolases-like"/>
    <property type="match status" value="1"/>
</dbReference>
<name>QUEC_JANMA</name>
<accession>A6T2X9</accession>
<reference key="1">
    <citation type="journal article" date="2007" name="PLoS Genet.">
        <title>Genome analysis of Minibacterium massiliensis highlights the convergent evolution of water-living bacteria.</title>
        <authorList>
            <person name="Audic S."/>
            <person name="Robert C."/>
            <person name="Campagna B."/>
            <person name="Parinello H."/>
            <person name="Claverie J.-M."/>
            <person name="Raoult D."/>
            <person name="Drancourt M."/>
        </authorList>
    </citation>
    <scope>NUCLEOTIDE SEQUENCE [LARGE SCALE GENOMIC DNA]</scope>
    <source>
        <strain>Marseille</strain>
    </source>
</reference>